<accession>B5E782</accession>
<evidence type="ECO:0000255" key="1">
    <source>
        <dbReference type="HAMAP-Rule" id="MF_00182"/>
    </source>
</evidence>
<sequence length="311" mass="34047">MTKLIFMGTPDFSATVLKGLLTDDRYEILAVVTQPDRAVGRKKVIQETPVKQAAKEAGLSIYQPEKLSGSPEMEELMKLGADGIVTAAFGQFLPSKLLDSMDFAVNVHASLLPRHRGGAPIHYALIQGDEEAGVTIMEMVKEMDAGDMISRRSIPITDEDNVGTLFEKLALVGRDLLLDTLPAYIAGDIKPEPQDTSQVTFSPNIKPEEEKLDWNKTNRQLFNQIRGMNPWPVAHTFLKGDRFKIYEALPVEGQGNPGEILSICKKELIVATAEGALSLKQVQPAGKPKMDIASFLNGVGRTLTVGERFGD</sequence>
<feature type="chain" id="PRO_1000098448" description="Methionyl-tRNA formyltransferase">
    <location>
        <begin position="1"/>
        <end position="311"/>
    </location>
</feature>
<feature type="binding site" evidence="1">
    <location>
        <begin position="110"/>
        <end position="113"/>
    </location>
    <ligand>
        <name>(6S)-5,6,7,8-tetrahydrofolate</name>
        <dbReference type="ChEBI" id="CHEBI:57453"/>
    </ligand>
</feature>
<dbReference type="EC" id="2.1.2.9" evidence="1"/>
<dbReference type="EMBL" id="CP001015">
    <property type="protein sequence ID" value="ACF56411.1"/>
    <property type="molecule type" value="Genomic_DNA"/>
</dbReference>
<dbReference type="SMR" id="B5E782"/>
<dbReference type="KEGG" id="spx:SPG_1641"/>
<dbReference type="HOGENOM" id="CLU_033347_1_1_9"/>
<dbReference type="GO" id="GO:0005829">
    <property type="term" value="C:cytosol"/>
    <property type="evidence" value="ECO:0007669"/>
    <property type="project" value="TreeGrafter"/>
</dbReference>
<dbReference type="GO" id="GO:0004479">
    <property type="term" value="F:methionyl-tRNA formyltransferase activity"/>
    <property type="evidence" value="ECO:0007669"/>
    <property type="project" value="UniProtKB-UniRule"/>
</dbReference>
<dbReference type="CDD" id="cd08646">
    <property type="entry name" value="FMT_core_Met-tRNA-FMT_N"/>
    <property type="match status" value="1"/>
</dbReference>
<dbReference type="CDD" id="cd08704">
    <property type="entry name" value="Met_tRNA_FMT_C"/>
    <property type="match status" value="1"/>
</dbReference>
<dbReference type="FunFam" id="3.10.25.10:FF:000004">
    <property type="entry name" value="Methionyl-tRNA formyltransferase"/>
    <property type="match status" value="1"/>
</dbReference>
<dbReference type="FunFam" id="3.40.50.170:FF:000004">
    <property type="entry name" value="Methionyl-tRNA formyltransferase"/>
    <property type="match status" value="1"/>
</dbReference>
<dbReference type="Gene3D" id="3.10.25.10">
    <property type="entry name" value="Formyl transferase, C-terminal domain"/>
    <property type="match status" value="1"/>
</dbReference>
<dbReference type="Gene3D" id="3.40.50.170">
    <property type="entry name" value="Formyl transferase, N-terminal domain"/>
    <property type="match status" value="1"/>
</dbReference>
<dbReference type="HAMAP" id="MF_00182">
    <property type="entry name" value="Formyl_trans"/>
    <property type="match status" value="1"/>
</dbReference>
<dbReference type="InterPro" id="IPR005794">
    <property type="entry name" value="Fmt"/>
</dbReference>
<dbReference type="InterPro" id="IPR005793">
    <property type="entry name" value="Formyl_trans_C"/>
</dbReference>
<dbReference type="InterPro" id="IPR037022">
    <property type="entry name" value="Formyl_trans_C_sf"/>
</dbReference>
<dbReference type="InterPro" id="IPR002376">
    <property type="entry name" value="Formyl_transf_N"/>
</dbReference>
<dbReference type="InterPro" id="IPR036477">
    <property type="entry name" value="Formyl_transf_N_sf"/>
</dbReference>
<dbReference type="InterPro" id="IPR011034">
    <property type="entry name" value="Formyl_transferase-like_C_sf"/>
</dbReference>
<dbReference type="InterPro" id="IPR001555">
    <property type="entry name" value="GART_AS"/>
</dbReference>
<dbReference type="InterPro" id="IPR044135">
    <property type="entry name" value="Met-tRNA-FMT_C"/>
</dbReference>
<dbReference type="InterPro" id="IPR041711">
    <property type="entry name" value="Met-tRNA-FMT_N"/>
</dbReference>
<dbReference type="NCBIfam" id="TIGR00460">
    <property type="entry name" value="fmt"/>
    <property type="match status" value="1"/>
</dbReference>
<dbReference type="PANTHER" id="PTHR11138">
    <property type="entry name" value="METHIONYL-TRNA FORMYLTRANSFERASE"/>
    <property type="match status" value="1"/>
</dbReference>
<dbReference type="PANTHER" id="PTHR11138:SF5">
    <property type="entry name" value="METHIONYL-TRNA FORMYLTRANSFERASE, MITOCHONDRIAL"/>
    <property type="match status" value="1"/>
</dbReference>
<dbReference type="Pfam" id="PF02911">
    <property type="entry name" value="Formyl_trans_C"/>
    <property type="match status" value="1"/>
</dbReference>
<dbReference type="Pfam" id="PF00551">
    <property type="entry name" value="Formyl_trans_N"/>
    <property type="match status" value="1"/>
</dbReference>
<dbReference type="SUPFAM" id="SSF50486">
    <property type="entry name" value="FMT C-terminal domain-like"/>
    <property type="match status" value="1"/>
</dbReference>
<dbReference type="SUPFAM" id="SSF53328">
    <property type="entry name" value="Formyltransferase"/>
    <property type="match status" value="1"/>
</dbReference>
<dbReference type="PROSITE" id="PS00373">
    <property type="entry name" value="GART"/>
    <property type="match status" value="1"/>
</dbReference>
<reference key="1">
    <citation type="journal article" date="2001" name="Microb. Drug Resist.">
        <title>Annotated draft genomic sequence from a Streptococcus pneumoniae type 19F clinical isolate.</title>
        <authorList>
            <person name="Dopazo J."/>
            <person name="Mendoza A."/>
            <person name="Herrero J."/>
            <person name="Caldara F."/>
            <person name="Humbert Y."/>
            <person name="Friedli L."/>
            <person name="Guerrier M."/>
            <person name="Grand-Schenk E."/>
            <person name="Gandin C."/>
            <person name="de Francesco M."/>
            <person name="Polissi A."/>
            <person name="Buell G."/>
            <person name="Feger G."/>
            <person name="Garcia E."/>
            <person name="Peitsch M."/>
            <person name="Garcia-Bustos J.F."/>
        </authorList>
    </citation>
    <scope>NUCLEOTIDE SEQUENCE [LARGE SCALE GENOMIC DNA]</scope>
    <source>
        <strain>G54</strain>
    </source>
</reference>
<reference key="2">
    <citation type="submission" date="2008-03" db="EMBL/GenBank/DDBJ databases">
        <title>Pneumococcal beta glucoside metabolism investigated by whole genome comparison.</title>
        <authorList>
            <person name="Mulas L."/>
            <person name="Trappetti C."/>
            <person name="Hakenbeck R."/>
            <person name="Iannelli F."/>
            <person name="Pozzi G."/>
            <person name="Davidsen T.M."/>
            <person name="Tettelin H."/>
            <person name="Oggioni M."/>
        </authorList>
    </citation>
    <scope>NUCLEOTIDE SEQUENCE [LARGE SCALE GENOMIC DNA]</scope>
    <source>
        <strain>G54</strain>
    </source>
</reference>
<keyword id="KW-0648">Protein biosynthesis</keyword>
<keyword id="KW-0808">Transferase</keyword>
<gene>
    <name evidence="1" type="primary">fmt</name>
    <name type="ordered locus">SPG_1641</name>
</gene>
<proteinExistence type="inferred from homology"/>
<comment type="function">
    <text evidence="1">Attaches a formyl group to the free amino group of methionyl-tRNA(fMet). The formyl group appears to play a dual role in the initiator identity of N-formylmethionyl-tRNA by promoting its recognition by IF2 and preventing the misappropriation of this tRNA by the elongation apparatus.</text>
</comment>
<comment type="catalytic activity">
    <reaction evidence="1">
        <text>L-methionyl-tRNA(fMet) + (6R)-10-formyltetrahydrofolate = N-formyl-L-methionyl-tRNA(fMet) + (6S)-5,6,7,8-tetrahydrofolate + H(+)</text>
        <dbReference type="Rhea" id="RHEA:24380"/>
        <dbReference type="Rhea" id="RHEA-COMP:9952"/>
        <dbReference type="Rhea" id="RHEA-COMP:9953"/>
        <dbReference type="ChEBI" id="CHEBI:15378"/>
        <dbReference type="ChEBI" id="CHEBI:57453"/>
        <dbReference type="ChEBI" id="CHEBI:78530"/>
        <dbReference type="ChEBI" id="CHEBI:78844"/>
        <dbReference type="ChEBI" id="CHEBI:195366"/>
        <dbReference type="EC" id="2.1.2.9"/>
    </reaction>
</comment>
<comment type="similarity">
    <text evidence="1">Belongs to the Fmt family.</text>
</comment>
<protein>
    <recommendedName>
        <fullName evidence="1">Methionyl-tRNA formyltransferase</fullName>
        <ecNumber evidence="1">2.1.2.9</ecNumber>
    </recommendedName>
</protein>
<name>FMT_STRP4</name>
<organism>
    <name type="scientific">Streptococcus pneumoniae serotype 19F (strain G54)</name>
    <dbReference type="NCBI Taxonomy" id="512566"/>
    <lineage>
        <taxon>Bacteria</taxon>
        <taxon>Bacillati</taxon>
        <taxon>Bacillota</taxon>
        <taxon>Bacilli</taxon>
        <taxon>Lactobacillales</taxon>
        <taxon>Streptococcaceae</taxon>
        <taxon>Streptococcus</taxon>
    </lineage>
</organism>